<feature type="chain" id="PRO_0000350364" description="Probable dual-specificity RNA methyltransferase RlmN">
    <location>
        <begin position="1"/>
        <end position="369"/>
    </location>
</feature>
<feature type="domain" description="Radical SAM core" evidence="2">
    <location>
        <begin position="114"/>
        <end position="351"/>
    </location>
</feature>
<feature type="active site" description="Proton acceptor" evidence="1">
    <location>
        <position position="108"/>
    </location>
</feature>
<feature type="active site" description="S-methylcysteine intermediate" evidence="1">
    <location>
        <position position="362"/>
    </location>
</feature>
<feature type="binding site" evidence="1">
    <location>
        <position position="128"/>
    </location>
    <ligand>
        <name>[4Fe-4S] cluster</name>
        <dbReference type="ChEBI" id="CHEBI:49883"/>
        <note>4Fe-4S-S-AdoMet</note>
    </ligand>
</feature>
<feature type="binding site" evidence="1">
    <location>
        <position position="132"/>
    </location>
    <ligand>
        <name>[4Fe-4S] cluster</name>
        <dbReference type="ChEBI" id="CHEBI:49883"/>
        <note>4Fe-4S-S-AdoMet</note>
    </ligand>
</feature>
<feature type="binding site" evidence="1">
    <location>
        <position position="135"/>
    </location>
    <ligand>
        <name>[4Fe-4S] cluster</name>
        <dbReference type="ChEBI" id="CHEBI:49883"/>
        <note>4Fe-4S-S-AdoMet</note>
    </ligand>
</feature>
<feature type="binding site" evidence="1">
    <location>
        <begin position="183"/>
        <end position="184"/>
    </location>
    <ligand>
        <name>S-adenosyl-L-methionine</name>
        <dbReference type="ChEBI" id="CHEBI:59789"/>
    </ligand>
</feature>
<feature type="binding site" evidence="1">
    <location>
        <position position="217"/>
    </location>
    <ligand>
        <name>S-adenosyl-L-methionine</name>
        <dbReference type="ChEBI" id="CHEBI:59789"/>
    </ligand>
</feature>
<feature type="binding site" evidence="1">
    <location>
        <begin position="240"/>
        <end position="242"/>
    </location>
    <ligand>
        <name>S-adenosyl-L-methionine</name>
        <dbReference type="ChEBI" id="CHEBI:59789"/>
    </ligand>
</feature>
<feature type="binding site" evidence="1">
    <location>
        <position position="319"/>
    </location>
    <ligand>
        <name>S-adenosyl-L-methionine</name>
        <dbReference type="ChEBI" id="CHEBI:59789"/>
    </ligand>
</feature>
<feature type="disulfide bond" description="(transient)" evidence="1">
    <location>
        <begin position="121"/>
        <end position="362"/>
    </location>
</feature>
<protein>
    <recommendedName>
        <fullName evidence="1">Probable dual-specificity RNA methyltransferase RlmN</fullName>
        <ecNumber evidence="1">2.1.1.192</ecNumber>
    </recommendedName>
    <alternativeName>
        <fullName evidence="1">23S rRNA (adenine(2503)-C(2))-methyltransferase</fullName>
    </alternativeName>
    <alternativeName>
        <fullName evidence="1">23S rRNA m2A2503 methyltransferase</fullName>
    </alternativeName>
    <alternativeName>
        <fullName evidence="1">Ribosomal RNA large subunit methyltransferase N</fullName>
    </alternativeName>
    <alternativeName>
        <fullName evidence="1">tRNA (adenine(37)-C(2))-methyltransferase</fullName>
    </alternativeName>
    <alternativeName>
        <fullName evidence="1">tRNA m2A37 methyltransferase</fullName>
    </alternativeName>
</protein>
<proteinExistence type="inferred from homology"/>
<gene>
    <name evidence="1" type="primary">rlmN</name>
    <name type="ordered locus">RHA1_ro06586</name>
</gene>
<evidence type="ECO:0000255" key="1">
    <source>
        <dbReference type="HAMAP-Rule" id="MF_01849"/>
    </source>
</evidence>
<evidence type="ECO:0000255" key="2">
    <source>
        <dbReference type="PROSITE-ProRule" id="PRU01266"/>
    </source>
</evidence>
<comment type="function">
    <text evidence="1">Specifically methylates position 2 of adenine 2503 in 23S rRNA and position 2 of adenine 37 in tRNAs.</text>
</comment>
<comment type="catalytic activity">
    <reaction evidence="1">
        <text>adenosine(2503) in 23S rRNA + 2 reduced [2Fe-2S]-[ferredoxin] + 2 S-adenosyl-L-methionine = 2-methyladenosine(2503) in 23S rRNA + 5'-deoxyadenosine + L-methionine + 2 oxidized [2Fe-2S]-[ferredoxin] + S-adenosyl-L-homocysteine</text>
        <dbReference type="Rhea" id="RHEA:42916"/>
        <dbReference type="Rhea" id="RHEA-COMP:10000"/>
        <dbReference type="Rhea" id="RHEA-COMP:10001"/>
        <dbReference type="Rhea" id="RHEA-COMP:10152"/>
        <dbReference type="Rhea" id="RHEA-COMP:10282"/>
        <dbReference type="ChEBI" id="CHEBI:17319"/>
        <dbReference type="ChEBI" id="CHEBI:33737"/>
        <dbReference type="ChEBI" id="CHEBI:33738"/>
        <dbReference type="ChEBI" id="CHEBI:57844"/>
        <dbReference type="ChEBI" id="CHEBI:57856"/>
        <dbReference type="ChEBI" id="CHEBI:59789"/>
        <dbReference type="ChEBI" id="CHEBI:74411"/>
        <dbReference type="ChEBI" id="CHEBI:74497"/>
        <dbReference type="EC" id="2.1.1.192"/>
    </reaction>
</comment>
<comment type="catalytic activity">
    <reaction evidence="1">
        <text>adenosine(37) in tRNA + 2 reduced [2Fe-2S]-[ferredoxin] + 2 S-adenosyl-L-methionine = 2-methyladenosine(37) in tRNA + 5'-deoxyadenosine + L-methionine + 2 oxidized [2Fe-2S]-[ferredoxin] + S-adenosyl-L-homocysteine</text>
        <dbReference type="Rhea" id="RHEA:43332"/>
        <dbReference type="Rhea" id="RHEA-COMP:10000"/>
        <dbReference type="Rhea" id="RHEA-COMP:10001"/>
        <dbReference type="Rhea" id="RHEA-COMP:10162"/>
        <dbReference type="Rhea" id="RHEA-COMP:10485"/>
        <dbReference type="ChEBI" id="CHEBI:17319"/>
        <dbReference type="ChEBI" id="CHEBI:33737"/>
        <dbReference type="ChEBI" id="CHEBI:33738"/>
        <dbReference type="ChEBI" id="CHEBI:57844"/>
        <dbReference type="ChEBI" id="CHEBI:57856"/>
        <dbReference type="ChEBI" id="CHEBI:59789"/>
        <dbReference type="ChEBI" id="CHEBI:74411"/>
        <dbReference type="ChEBI" id="CHEBI:74497"/>
        <dbReference type="EC" id="2.1.1.192"/>
    </reaction>
</comment>
<comment type="cofactor">
    <cofactor evidence="1">
        <name>[4Fe-4S] cluster</name>
        <dbReference type="ChEBI" id="CHEBI:49883"/>
    </cofactor>
    <text evidence="1">Binds 1 [4Fe-4S] cluster. The cluster is coordinated with 3 cysteines and an exchangeable S-adenosyl-L-methionine.</text>
</comment>
<comment type="subcellular location">
    <subcellularLocation>
        <location evidence="1">Cytoplasm</location>
    </subcellularLocation>
</comment>
<comment type="miscellaneous">
    <text evidence="1">Reaction proceeds by a ping-pong mechanism involving intermediate methylation of a conserved cysteine residue.</text>
</comment>
<comment type="similarity">
    <text evidence="1">Belongs to the radical SAM superfamily. RlmN family.</text>
</comment>
<accession>Q0S277</accession>
<sequence length="369" mass="39771">MAVSLPLVFTAPRRGMPPKHLADLDSAERREAVKELGLPGFRADQLARQYYARLEADPEKMTDLPAAVREQVGAALFPTLLTPVKHLACDGGDTRKTLWKANDGTLLESVLMRYPDRATLCISSQAGCGMACPFCATGQGGLQRNLSTAEIVDQVRAAAAALRDGDVHGGPGRLSNVVFMGMGEPLANYKRVVAAVRRITSPAPDGLGLSQRSVTVSTVGLAPAIRKLADEDLSVTLAVSLHTPDDELRDTLVPVNNRWSVAEVLDAARYYADKSGRRVSIEYALIRDVNDQPWRADLLGKKLRKALGPLVHVNLIPLNPTPGSEWDASPKPVEKEFVRRVLAQGVSCTVRDTRGQEIAAACGQLAAEN</sequence>
<keyword id="KW-0004">4Fe-4S</keyword>
<keyword id="KW-0963">Cytoplasm</keyword>
<keyword id="KW-1015">Disulfide bond</keyword>
<keyword id="KW-0408">Iron</keyword>
<keyword id="KW-0411">Iron-sulfur</keyword>
<keyword id="KW-0479">Metal-binding</keyword>
<keyword id="KW-0489">Methyltransferase</keyword>
<keyword id="KW-0698">rRNA processing</keyword>
<keyword id="KW-0949">S-adenosyl-L-methionine</keyword>
<keyword id="KW-0808">Transferase</keyword>
<keyword id="KW-0819">tRNA processing</keyword>
<organism>
    <name type="scientific">Rhodococcus jostii (strain RHA1)</name>
    <dbReference type="NCBI Taxonomy" id="101510"/>
    <lineage>
        <taxon>Bacteria</taxon>
        <taxon>Bacillati</taxon>
        <taxon>Actinomycetota</taxon>
        <taxon>Actinomycetes</taxon>
        <taxon>Mycobacteriales</taxon>
        <taxon>Nocardiaceae</taxon>
        <taxon>Rhodococcus</taxon>
    </lineage>
</organism>
<name>RLMN_RHOJR</name>
<dbReference type="EC" id="2.1.1.192" evidence="1"/>
<dbReference type="EMBL" id="CP000431">
    <property type="protein sequence ID" value="ABG98359.1"/>
    <property type="molecule type" value="Genomic_DNA"/>
</dbReference>
<dbReference type="RefSeq" id="WP_005240549.1">
    <property type="nucleotide sequence ID" value="NC_008268.1"/>
</dbReference>
<dbReference type="SMR" id="Q0S277"/>
<dbReference type="GeneID" id="69890960"/>
<dbReference type="KEGG" id="rha:RHA1_ro06586"/>
<dbReference type="eggNOG" id="COG0820">
    <property type="taxonomic scope" value="Bacteria"/>
</dbReference>
<dbReference type="HOGENOM" id="CLU_029101_0_2_11"/>
<dbReference type="OrthoDB" id="9793973at2"/>
<dbReference type="Proteomes" id="UP000008710">
    <property type="component" value="Chromosome"/>
</dbReference>
<dbReference type="GO" id="GO:0005737">
    <property type="term" value="C:cytoplasm"/>
    <property type="evidence" value="ECO:0007669"/>
    <property type="project" value="UniProtKB-SubCell"/>
</dbReference>
<dbReference type="GO" id="GO:0051539">
    <property type="term" value="F:4 iron, 4 sulfur cluster binding"/>
    <property type="evidence" value="ECO:0007669"/>
    <property type="project" value="UniProtKB-UniRule"/>
</dbReference>
<dbReference type="GO" id="GO:0046872">
    <property type="term" value="F:metal ion binding"/>
    <property type="evidence" value="ECO:0007669"/>
    <property type="project" value="UniProtKB-KW"/>
</dbReference>
<dbReference type="GO" id="GO:0070040">
    <property type="term" value="F:rRNA (adenine(2503)-C2-)-methyltransferase activity"/>
    <property type="evidence" value="ECO:0007669"/>
    <property type="project" value="UniProtKB-UniRule"/>
</dbReference>
<dbReference type="GO" id="GO:0019843">
    <property type="term" value="F:rRNA binding"/>
    <property type="evidence" value="ECO:0007669"/>
    <property type="project" value="UniProtKB-UniRule"/>
</dbReference>
<dbReference type="GO" id="GO:0002935">
    <property type="term" value="F:tRNA (adenine(37)-C2)-methyltransferase activity"/>
    <property type="evidence" value="ECO:0007669"/>
    <property type="project" value="UniProtKB-UniRule"/>
</dbReference>
<dbReference type="GO" id="GO:0000049">
    <property type="term" value="F:tRNA binding"/>
    <property type="evidence" value="ECO:0007669"/>
    <property type="project" value="UniProtKB-UniRule"/>
</dbReference>
<dbReference type="GO" id="GO:0070475">
    <property type="term" value="P:rRNA base methylation"/>
    <property type="evidence" value="ECO:0007669"/>
    <property type="project" value="UniProtKB-UniRule"/>
</dbReference>
<dbReference type="GO" id="GO:0030488">
    <property type="term" value="P:tRNA methylation"/>
    <property type="evidence" value="ECO:0007669"/>
    <property type="project" value="UniProtKB-UniRule"/>
</dbReference>
<dbReference type="CDD" id="cd01335">
    <property type="entry name" value="Radical_SAM"/>
    <property type="match status" value="1"/>
</dbReference>
<dbReference type="FunFam" id="3.20.20.70:FF:000014">
    <property type="entry name" value="Probable dual-specificity RNA methyltransferase RlmN"/>
    <property type="match status" value="1"/>
</dbReference>
<dbReference type="Gene3D" id="1.10.150.530">
    <property type="match status" value="1"/>
</dbReference>
<dbReference type="Gene3D" id="3.20.20.70">
    <property type="entry name" value="Aldolase class I"/>
    <property type="match status" value="1"/>
</dbReference>
<dbReference type="HAMAP" id="MF_01849">
    <property type="entry name" value="RNA_methyltr_RlmN"/>
    <property type="match status" value="1"/>
</dbReference>
<dbReference type="InterPro" id="IPR013785">
    <property type="entry name" value="Aldolase_TIM"/>
</dbReference>
<dbReference type="InterPro" id="IPR040072">
    <property type="entry name" value="Methyltransferase_A"/>
</dbReference>
<dbReference type="InterPro" id="IPR027492">
    <property type="entry name" value="RNA_MTrfase_RlmN"/>
</dbReference>
<dbReference type="InterPro" id="IPR004383">
    <property type="entry name" value="rRNA_lsu_MTrfase_RlmN/Cfr"/>
</dbReference>
<dbReference type="InterPro" id="IPR007197">
    <property type="entry name" value="rSAM"/>
</dbReference>
<dbReference type="NCBIfam" id="TIGR00048">
    <property type="entry name" value="rRNA_mod_RlmN"/>
    <property type="match status" value="1"/>
</dbReference>
<dbReference type="PANTHER" id="PTHR30544">
    <property type="entry name" value="23S RRNA METHYLTRANSFERASE"/>
    <property type="match status" value="1"/>
</dbReference>
<dbReference type="PANTHER" id="PTHR30544:SF5">
    <property type="entry name" value="RADICAL SAM CORE DOMAIN-CONTAINING PROTEIN"/>
    <property type="match status" value="1"/>
</dbReference>
<dbReference type="Pfam" id="PF04055">
    <property type="entry name" value="Radical_SAM"/>
    <property type="match status" value="1"/>
</dbReference>
<dbReference type="PIRSF" id="PIRSF006004">
    <property type="entry name" value="CHP00048"/>
    <property type="match status" value="1"/>
</dbReference>
<dbReference type="SFLD" id="SFLDF00275">
    <property type="entry name" value="adenosine_C2_methyltransferase"/>
    <property type="match status" value="1"/>
</dbReference>
<dbReference type="SFLD" id="SFLDG01062">
    <property type="entry name" value="methyltransferase_(Class_A)"/>
    <property type="match status" value="1"/>
</dbReference>
<dbReference type="SUPFAM" id="SSF102114">
    <property type="entry name" value="Radical SAM enzymes"/>
    <property type="match status" value="1"/>
</dbReference>
<dbReference type="PROSITE" id="PS51918">
    <property type="entry name" value="RADICAL_SAM"/>
    <property type="match status" value="1"/>
</dbReference>
<reference key="1">
    <citation type="journal article" date="2006" name="Proc. Natl. Acad. Sci. U.S.A.">
        <title>The complete genome of Rhodococcus sp. RHA1 provides insights into a catabolic powerhouse.</title>
        <authorList>
            <person name="McLeod M.P."/>
            <person name="Warren R.L."/>
            <person name="Hsiao W.W.L."/>
            <person name="Araki N."/>
            <person name="Myhre M."/>
            <person name="Fernandes C."/>
            <person name="Miyazawa D."/>
            <person name="Wong W."/>
            <person name="Lillquist A.L."/>
            <person name="Wang D."/>
            <person name="Dosanjh M."/>
            <person name="Hara H."/>
            <person name="Petrescu A."/>
            <person name="Morin R.D."/>
            <person name="Yang G."/>
            <person name="Stott J.M."/>
            <person name="Schein J.E."/>
            <person name="Shin H."/>
            <person name="Smailus D."/>
            <person name="Siddiqui A.S."/>
            <person name="Marra M.A."/>
            <person name="Jones S.J.M."/>
            <person name="Holt R."/>
            <person name="Brinkman F.S.L."/>
            <person name="Miyauchi K."/>
            <person name="Fukuda M."/>
            <person name="Davies J.E."/>
            <person name="Mohn W.W."/>
            <person name="Eltis L.D."/>
        </authorList>
    </citation>
    <scope>NUCLEOTIDE SEQUENCE [LARGE SCALE GENOMIC DNA]</scope>
    <source>
        <strain>RHA1</strain>
    </source>
</reference>